<accession>Q9L2E9</accession>
<gene>
    <name type="ordered locus">SCO2470</name>
    <name type="ORF">SC7A8.09c</name>
</gene>
<organism>
    <name type="scientific">Streptomyces coelicolor (strain ATCC BAA-471 / A3(2) / M145)</name>
    <dbReference type="NCBI Taxonomy" id="100226"/>
    <lineage>
        <taxon>Bacteria</taxon>
        <taxon>Bacillati</taxon>
        <taxon>Actinomycetota</taxon>
        <taxon>Actinomycetes</taxon>
        <taxon>Kitasatosporales</taxon>
        <taxon>Streptomycetaceae</taxon>
        <taxon>Streptomyces</taxon>
        <taxon>Streptomyces albidoflavus group</taxon>
    </lineage>
</organism>
<sequence length="424" mass="45895">MEGTAPPTPYDPASVARYAPEPDKRPGRTAFQRDRARILHSGALRRLAGKTQVVAPGEGSPVWDASPRTRLTHSLECAQVGRELGAALGCDPDLVEAACLAHDLGHPPFGHNGEQALNAFAEDCGGFEGNAQSLRLLTRIEPKRFTEDGSVGLNLTRATLDAATKYPWPRGAHPAVPASPKFGVYDDDRPVFAWLREDAPGARTCFEAQVMDWADDVAYSVHDVEDGLHAGHIDPNCLLADPEREAVFDAAVGRFVPAGTDHAELAAALDRLLAQDWWPHGYDGSAPAQARLKDATSQLIGRFCLAAEAATRAAYGDGRLTRYAAELVVPRETRMECAVLKAVAVRYVMQRTEQERLRADQRIVVAELAEALTARAPDGLDPQFRALFDAAADDRARKRVVVDQIASLTDASARSLHARLTGHP</sequence>
<feature type="chain" id="PRO_0000205321" description="Deoxyguanosinetriphosphate triphosphohydrolase-like protein">
    <location>
        <begin position="1"/>
        <end position="424"/>
    </location>
</feature>
<feature type="domain" description="HD" evidence="2">
    <location>
        <begin position="70"/>
        <end position="220"/>
    </location>
</feature>
<feature type="region of interest" description="Disordered" evidence="3">
    <location>
        <begin position="1"/>
        <end position="31"/>
    </location>
</feature>
<feature type="compositionally biased region" description="Pro residues" evidence="3">
    <location>
        <begin position="1"/>
        <end position="10"/>
    </location>
</feature>
<feature type="compositionally biased region" description="Basic and acidic residues" evidence="3">
    <location>
        <begin position="20"/>
        <end position="31"/>
    </location>
</feature>
<keyword id="KW-0378">Hydrolase</keyword>
<keyword id="KW-1185">Reference proteome</keyword>
<reference key="1">
    <citation type="journal article" date="2002" name="Nature">
        <title>Complete genome sequence of the model actinomycete Streptomyces coelicolor A3(2).</title>
        <authorList>
            <person name="Bentley S.D."/>
            <person name="Chater K.F."/>
            <person name="Cerdeno-Tarraga A.-M."/>
            <person name="Challis G.L."/>
            <person name="Thomson N.R."/>
            <person name="James K.D."/>
            <person name="Harris D.E."/>
            <person name="Quail M.A."/>
            <person name="Kieser H."/>
            <person name="Harper D."/>
            <person name="Bateman A."/>
            <person name="Brown S."/>
            <person name="Chandra G."/>
            <person name="Chen C.W."/>
            <person name="Collins M."/>
            <person name="Cronin A."/>
            <person name="Fraser A."/>
            <person name="Goble A."/>
            <person name="Hidalgo J."/>
            <person name="Hornsby T."/>
            <person name="Howarth S."/>
            <person name="Huang C.-H."/>
            <person name="Kieser T."/>
            <person name="Larke L."/>
            <person name="Murphy L.D."/>
            <person name="Oliver K."/>
            <person name="O'Neil S."/>
            <person name="Rabbinowitsch E."/>
            <person name="Rajandream M.A."/>
            <person name="Rutherford K.M."/>
            <person name="Rutter S."/>
            <person name="Seeger K."/>
            <person name="Saunders D."/>
            <person name="Sharp S."/>
            <person name="Squares R."/>
            <person name="Squares S."/>
            <person name="Taylor K."/>
            <person name="Warren T."/>
            <person name="Wietzorrek A."/>
            <person name="Woodward J.R."/>
            <person name="Barrell B.G."/>
            <person name="Parkhill J."/>
            <person name="Hopwood D.A."/>
        </authorList>
    </citation>
    <scope>NUCLEOTIDE SEQUENCE [LARGE SCALE GENOMIC DNA]</scope>
    <source>
        <strain>ATCC BAA-471 / A3(2) / M145</strain>
    </source>
</reference>
<dbReference type="EMBL" id="AL939112">
    <property type="protein sequence ID" value="CAB69758.1"/>
    <property type="molecule type" value="Genomic_DNA"/>
</dbReference>
<dbReference type="RefSeq" id="NP_626712.1">
    <property type="nucleotide sequence ID" value="NC_003888.3"/>
</dbReference>
<dbReference type="RefSeq" id="WP_011028369.1">
    <property type="nucleotide sequence ID" value="NZ_VNID01000001.1"/>
</dbReference>
<dbReference type="SMR" id="Q9L2E9"/>
<dbReference type="FunCoup" id="Q9L2E9">
    <property type="interactions" value="31"/>
</dbReference>
<dbReference type="STRING" id="100226.gene:17760072"/>
<dbReference type="PaxDb" id="100226-SCO2470"/>
<dbReference type="KEGG" id="sco:SCO2470"/>
<dbReference type="PATRIC" id="fig|100226.15.peg.2511"/>
<dbReference type="eggNOG" id="COG0232">
    <property type="taxonomic scope" value="Bacteria"/>
</dbReference>
<dbReference type="HOGENOM" id="CLU_028163_0_1_11"/>
<dbReference type="InParanoid" id="Q9L2E9"/>
<dbReference type="OrthoDB" id="9803619at2"/>
<dbReference type="PhylomeDB" id="Q9L2E9"/>
<dbReference type="Proteomes" id="UP000001973">
    <property type="component" value="Chromosome"/>
</dbReference>
<dbReference type="GO" id="GO:0008832">
    <property type="term" value="F:dGTPase activity"/>
    <property type="evidence" value="ECO:0000318"/>
    <property type="project" value="GO_Central"/>
</dbReference>
<dbReference type="GO" id="GO:0006203">
    <property type="term" value="P:dGTP catabolic process"/>
    <property type="evidence" value="ECO:0000318"/>
    <property type="project" value="GO_Central"/>
</dbReference>
<dbReference type="CDD" id="cd00077">
    <property type="entry name" value="HDc"/>
    <property type="match status" value="1"/>
</dbReference>
<dbReference type="FunFam" id="1.10.3210.10:FF:000029">
    <property type="entry name" value="Deoxyguanosinetriphosphate triphosphohydrolase-like protein"/>
    <property type="match status" value="1"/>
</dbReference>
<dbReference type="Gene3D" id="1.10.3210.10">
    <property type="entry name" value="Hypothetical protein af1432"/>
    <property type="match status" value="1"/>
</dbReference>
<dbReference type="HAMAP" id="MF_01212">
    <property type="entry name" value="dGTPase_type2"/>
    <property type="match status" value="1"/>
</dbReference>
<dbReference type="InterPro" id="IPR006261">
    <property type="entry name" value="dGTPase"/>
</dbReference>
<dbReference type="InterPro" id="IPR050135">
    <property type="entry name" value="dGTPase-like"/>
</dbReference>
<dbReference type="InterPro" id="IPR023023">
    <property type="entry name" value="dNTPase_2"/>
</dbReference>
<dbReference type="InterPro" id="IPR003607">
    <property type="entry name" value="HD/PDEase_dom"/>
</dbReference>
<dbReference type="InterPro" id="IPR006674">
    <property type="entry name" value="HD_domain"/>
</dbReference>
<dbReference type="InterPro" id="IPR026875">
    <property type="entry name" value="PHydrolase_assoc_dom"/>
</dbReference>
<dbReference type="NCBIfam" id="TIGR01353">
    <property type="entry name" value="dGTP_triPase"/>
    <property type="match status" value="1"/>
</dbReference>
<dbReference type="NCBIfam" id="NF002829">
    <property type="entry name" value="PRK03007.1"/>
    <property type="match status" value="1"/>
</dbReference>
<dbReference type="PANTHER" id="PTHR11373:SF32">
    <property type="entry name" value="DEOXYGUANOSINETRIPHOSPHATE TRIPHOSPHOHYDROLASE"/>
    <property type="match status" value="1"/>
</dbReference>
<dbReference type="PANTHER" id="PTHR11373">
    <property type="entry name" value="DEOXYNUCLEOSIDE TRIPHOSPHATE TRIPHOSPHOHYDROLASE"/>
    <property type="match status" value="1"/>
</dbReference>
<dbReference type="Pfam" id="PF01966">
    <property type="entry name" value="HD"/>
    <property type="match status" value="1"/>
</dbReference>
<dbReference type="Pfam" id="PF13286">
    <property type="entry name" value="HD_assoc"/>
    <property type="match status" value="1"/>
</dbReference>
<dbReference type="SMART" id="SM00471">
    <property type="entry name" value="HDc"/>
    <property type="match status" value="1"/>
</dbReference>
<dbReference type="SUPFAM" id="SSF109604">
    <property type="entry name" value="HD-domain/PDEase-like"/>
    <property type="match status" value="1"/>
</dbReference>
<dbReference type="PROSITE" id="PS51831">
    <property type="entry name" value="HD"/>
    <property type="match status" value="1"/>
</dbReference>
<protein>
    <recommendedName>
        <fullName evidence="1">Deoxyguanosinetriphosphate triphosphohydrolase-like protein</fullName>
    </recommendedName>
</protein>
<name>DGTL1_STRCO</name>
<proteinExistence type="inferred from homology"/>
<evidence type="ECO:0000255" key="1">
    <source>
        <dbReference type="HAMAP-Rule" id="MF_01212"/>
    </source>
</evidence>
<evidence type="ECO:0000255" key="2">
    <source>
        <dbReference type="PROSITE-ProRule" id="PRU01175"/>
    </source>
</evidence>
<evidence type="ECO:0000256" key="3">
    <source>
        <dbReference type="SAM" id="MobiDB-lite"/>
    </source>
</evidence>
<comment type="similarity">
    <text evidence="1">Belongs to the dGTPase family. Type 2 subfamily.</text>
</comment>